<feature type="chain" id="PRO_0000065484" description="Uncharacterized protein T28D9.1">
    <location>
        <begin position="1"/>
        <end position="129"/>
    </location>
</feature>
<feature type="region of interest" description="Disordered" evidence="1">
    <location>
        <begin position="1"/>
        <end position="129"/>
    </location>
</feature>
<feature type="compositionally biased region" description="Low complexity" evidence="1">
    <location>
        <begin position="1"/>
        <end position="13"/>
    </location>
</feature>
<feature type="compositionally biased region" description="Basic and acidic residues" evidence="1">
    <location>
        <begin position="34"/>
        <end position="94"/>
    </location>
</feature>
<feature type="compositionally biased region" description="Low complexity" evidence="1">
    <location>
        <begin position="117"/>
        <end position="129"/>
    </location>
</feature>
<keyword id="KW-1185">Reference proteome</keyword>
<name>YSX1_CAEEL</name>
<gene>
    <name type="ORF">T28D9.1</name>
</gene>
<dbReference type="EMBL" id="FO081595">
    <property type="protein sequence ID" value="CCD72696.1"/>
    <property type="molecule type" value="Genomic_DNA"/>
</dbReference>
<dbReference type="PIR" id="T16955">
    <property type="entry name" value="T16955"/>
</dbReference>
<dbReference type="RefSeq" id="NP_001370789.1">
    <property type="nucleotide sequence ID" value="NM_001383864.2"/>
</dbReference>
<dbReference type="RefSeq" id="NP_495312.1">
    <property type="nucleotide sequence ID" value="NM_062911.3"/>
</dbReference>
<dbReference type="SMR" id="Q10020"/>
<dbReference type="BioGRID" id="39413">
    <property type="interactions" value="2"/>
</dbReference>
<dbReference type="FunCoup" id="Q10020">
    <property type="interactions" value="1418"/>
</dbReference>
<dbReference type="STRING" id="6239.T28D9.1.1"/>
<dbReference type="iPTMnet" id="Q10020"/>
<dbReference type="PaxDb" id="6239-T28D9.1"/>
<dbReference type="PeptideAtlas" id="Q10020"/>
<dbReference type="EnsemblMetazoa" id="T28D9.1.1">
    <property type="protein sequence ID" value="T28D9.1.1"/>
    <property type="gene ID" value="WBGene00020894"/>
</dbReference>
<dbReference type="GeneID" id="174074"/>
<dbReference type="UCSC" id="T28D9.1.1">
    <property type="organism name" value="c. elegans"/>
</dbReference>
<dbReference type="AGR" id="WB:WBGene00020894"/>
<dbReference type="WormBase" id="T28D9.1">
    <property type="protein sequence ID" value="CE28092"/>
    <property type="gene ID" value="WBGene00020894"/>
</dbReference>
<dbReference type="eggNOG" id="ENOG502TIMT">
    <property type="taxonomic scope" value="Eukaryota"/>
</dbReference>
<dbReference type="HOGENOM" id="CLU_1950724_0_0_1"/>
<dbReference type="InParanoid" id="Q10020"/>
<dbReference type="OMA" id="MAICLKL"/>
<dbReference type="PRO" id="PR:Q10020"/>
<dbReference type="Proteomes" id="UP000001940">
    <property type="component" value="Chromosome II"/>
</dbReference>
<dbReference type="Bgee" id="WBGene00020894">
    <property type="expression patterns" value="Expressed in pharyngeal muscle cell (C elegans) and 4 other cell types or tissues"/>
</dbReference>
<reference key="1">
    <citation type="journal article" date="1998" name="Science">
        <title>Genome sequence of the nematode C. elegans: a platform for investigating biology.</title>
        <authorList>
            <consortium name="The C. elegans sequencing consortium"/>
        </authorList>
    </citation>
    <scope>NUCLEOTIDE SEQUENCE [LARGE SCALE GENOMIC DNA]</scope>
    <source>
        <strain>Bristol N2</strain>
    </source>
</reference>
<sequence length="129" mass="13726">MSDVAETVVAQEPEVVEPVEEKPTETGSDDVVVIDEKTSEQNGEKTEETQAEATEEKNETEAEEADKDKAVENGEAKDTNGNDRKRVSSAHEEAPVADAEEDAPLTKKSKVEDEVDVAASGDAPAVAAE</sequence>
<proteinExistence type="predicted"/>
<accession>Q10020</accession>
<protein>
    <recommendedName>
        <fullName>Uncharacterized protein T28D9.1</fullName>
    </recommendedName>
</protein>
<organism>
    <name type="scientific">Caenorhabditis elegans</name>
    <dbReference type="NCBI Taxonomy" id="6239"/>
    <lineage>
        <taxon>Eukaryota</taxon>
        <taxon>Metazoa</taxon>
        <taxon>Ecdysozoa</taxon>
        <taxon>Nematoda</taxon>
        <taxon>Chromadorea</taxon>
        <taxon>Rhabditida</taxon>
        <taxon>Rhabditina</taxon>
        <taxon>Rhabditomorpha</taxon>
        <taxon>Rhabditoidea</taxon>
        <taxon>Rhabditidae</taxon>
        <taxon>Peloderinae</taxon>
        <taxon>Caenorhabditis</taxon>
    </lineage>
</organism>
<evidence type="ECO:0000256" key="1">
    <source>
        <dbReference type="SAM" id="MobiDB-lite"/>
    </source>
</evidence>